<sequence length="85" mass="9606">MNISKPEQRTLHVLAKGGRIIFTRNSSGKVTFVECYTREGYVLADCTLPVFTKLKNKRLIHSKSGKPYQINMAGLKAVRPQLDNQ</sequence>
<accession>Q2SFU4</accession>
<name>Y3746_HAHCH</name>
<keyword id="KW-1185">Reference proteome</keyword>
<comment type="similarity">
    <text evidence="1">Belongs to the UPF0386 family.</text>
</comment>
<proteinExistence type="inferred from homology"/>
<evidence type="ECO:0000255" key="1">
    <source>
        <dbReference type="HAMAP-Rule" id="MF_00827"/>
    </source>
</evidence>
<protein>
    <recommendedName>
        <fullName evidence="1">UPF0386 protein HCH_03746</fullName>
    </recommendedName>
</protein>
<reference key="1">
    <citation type="journal article" date="2005" name="Nucleic Acids Res.">
        <title>Genomic blueprint of Hahella chejuensis, a marine microbe producing an algicidal agent.</title>
        <authorList>
            <person name="Jeong H."/>
            <person name="Yim J.H."/>
            <person name="Lee C."/>
            <person name="Choi S.-H."/>
            <person name="Park Y.K."/>
            <person name="Yoon S.H."/>
            <person name="Hur C.-G."/>
            <person name="Kang H.-Y."/>
            <person name="Kim D."/>
            <person name="Lee H.H."/>
            <person name="Park K.H."/>
            <person name="Park S.-H."/>
            <person name="Park H.-S."/>
            <person name="Lee H.K."/>
            <person name="Oh T.K."/>
            <person name="Kim J.F."/>
        </authorList>
    </citation>
    <scope>NUCLEOTIDE SEQUENCE [LARGE SCALE GENOMIC DNA]</scope>
    <source>
        <strain>KCTC 2396</strain>
    </source>
</reference>
<organism>
    <name type="scientific">Hahella chejuensis (strain KCTC 2396)</name>
    <dbReference type="NCBI Taxonomy" id="349521"/>
    <lineage>
        <taxon>Bacteria</taxon>
        <taxon>Pseudomonadati</taxon>
        <taxon>Pseudomonadota</taxon>
        <taxon>Gammaproteobacteria</taxon>
        <taxon>Oceanospirillales</taxon>
        <taxon>Hahellaceae</taxon>
        <taxon>Hahella</taxon>
    </lineage>
</organism>
<dbReference type="EMBL" id="CP000155">
    <property type="protein sequence ID" value="ABC30480.1"/>
    <property type="molecule type" value="Genomic_DNA"/>
</dbReference>
<dbReference type="RefSeq" id="WP_011397548.1">
    <property type="nucleotide sequence ID" value="NC_007645.1"/>
</dbReference>
<dbReference type="STRING" id="349521.HCH_03746"/>
<dbReference type="KEGG" id="hch:HCH_03746"/>
<dbReference type="eggNOG" id="COG3811">
    <property type="taxonomic scope" value="Bacteria"/>
</dbReference>
<dbReference type="HOGENOM" id="CLU_164736_0_0_6"/>
<dbReference type="OrthoDB" id="7204880at2"/>
<dbReference type="Proteomes" id="UP000000238">
    <property type="component" value="Chromosome"/>
</dbReference>
<dbReference type="HAMAP" id="MF_00827">
    <property type="entry name" value="UPF0386"/>
    <property type="match status" value="1"/>
</dbReference>
<dbReference type="InterPro" id="IPR018654">
    <property type="entry name" value="YjhX_toxin"/>
</dbReference>
<dbReference type="NCBIfam" id="NF010240">
    <property type="entry name" value="PRK13687.1"/>
    <property type="match status" value="1"/>
</dbReference>
<dbReference type="Pfam" id="PF09857">
    <property type="entry name" value="YjhX_toxin"/>
    <property type="match status" value="1"/>
</dbReference>
<feature type="chain" id="PRO_0000252179" description="UPF0386 protein HCH_03746">
    <location>
        <begin position="1"/>
        <end position="85"/>
    </location>
</feature>
<gene>
    <name type="ordered locus">HCH_03746</name>
</gene>